<comment type="function">
    <text>This is one of three E.coli hydrogenases synthesized in response to different physiological conditions. HYD1 is believed to have a role in hydrogen cycling during fermentative growth.</text>
</comment>
<comment type="catalytic activity">
    <reaction>
        <text>H2 + A = AH2</text>
        <dbReference type="Rhea" id="RHEA:12116"/>
        <dbReference type="ChEBI" id="CHEBI:13193"/>
        <dbReference type="ChEBI" id="CHEBI:17499"/>
        <dbReference type="ChEBI" id="CHEBI:18276"/>
        <dbReference type="EC" id="1.12.99.6"/>
    </reaction>
</comment>
<comment type="cofactor">
    <cofactor evidence="1">
        <name>[4Fe-4S] cluster</name>
        <dbReference type="ChEBI" id="CHEBI:49883"/>
    </cofactor>
    <text evidence="1">Binds 2 [4Fe-4S] clusters.</text>
</comment>
<comment type="cofactor">
    <cofactor evidence="1">
        <name>[3Fe-4S] cluster</name>
        <dbReference type="ChEBI" id="CHEBI:21137"/>
    </cofactor>
    <text evidence="1">Binds 1 [3Fe-4S] cluster.</text>
</comment>
<comment type="subunit">
    <text>Heterodimer of a large and a small subunit.</text>
</comment>
<comment type="interaction">
    <interactant intactId="EBI-9124108">
        <id>P69739</id>
    </interactant>
    <interactant intactId="EBI-851493">
        <id>P0ACD8</id>
        <label>hyaB</label>
    </interactant>
    <organismsDiffer>false</organismsDiffer>
    <experiments>6</experiments>
</comment>
<comment type="subcellular location">
    <subcellularLocation>
        <location>Cell inner membrane</location>
        <topology>Single-pass type I membrane protein</topology>
        <orientation>Periplasmic side</orientation>
    </subcellularLocation>
</comment>
<comment type="PTM">
    <text>Exported by the Tat system. The position of the signal peptide cleavage has been experimentally proven.</text>
</comment>
<comment type="similarity">
    <text evidence="6">Belongs to the [NiFe]/[NiFeSe] hydrogenase small subunit family.</text>
</comment>
<gene>
    <name type="primary">hyaA</name>
    <name type="ordered locus">b0972</name>
    <name type="ordered locus">JW0954</name>
</gene>
<reference key="1">
    <citation type="journal article" date="1990" name="J. Bacteriol.">
        <title>Cloning and sequencing of a putative Escherichia coli [NiFe] hydrogenase-1 operon containing six open reading frames.</title>
        <authorList>
            <person name="Menon N.K."/>
            <person name="Robbins J."/>
            <person name="Peck H.D. Jr."/>
            <person name="Chatelus C.Y."/>
            <person name="Choi E.-S."/>
            <person name="Przybyla A.E."/>
        </authorList>
    </citation>
    <scope>NUCLEOTIDE SEQUENCE [GENOMIC DNA]</scope>
    <scope>PROTEIN SEQUENCE OF 46-50</scope>
</reference>
<reference key="2">
    <citation type="journal article" date="1997" name="Science">
        <title>The complete genome sequence of Escherichia coli K-12.</title>
        <authorList>
            <person name="Blattner F.R."/>
            <person name="Plunkett G. III"/>
            <person name="Bloch C.A."/>
            <person name="Perna N.T."/>
            <person name="Burland V."/>
            <person name="Riley M."/>
            <person name="Collado-Vides J."/>
            <person name="Glasner J.D."/>
            <person name="Rode C.K."/>
            <person name="Mayhew G.F."/>
            <person name="Gregor J."/>
            <person name="Davis N.W."/>
            <person name="Kirkpatrick H.A."/>
            <person name="Goeden M.A."/>
            <person name="Rose D.J."/>
            <person name="Mau B."/>
            <person name="Shao Y."/>
        </authorList>
    </citation>
    <scope>NUCLEOTIDE SEQUENCE [LARGE SCALE GENOMIC DNA]</scope>
    <source>
        <strain>K12 / MG1655 / ATCC 47076</strain>
    </source>
</reference>
<reference key="3">
    <citation type="journal article" date="2006" name="Mol. Syst. Biol.">
        <title>Highly accurate genome sequences of Escherichia coli K-12 strains MG1655 and W3110.</title>
        <authorList>
            <person name="Hayashi K."/>
            <person name="Morooka N."/>
            <person name="Yamamoto Y."/>
            <person name="Fujita K."/>
            <person name="Isono K."/>
            <person name="Choi S."/>
            <person name="Ohtsubo E."/>
            <person name="Baba T."/>
            <person name="Wanner B.L."/>
            <person name="Mori H."/>
            <person name="Horiuchi T."/>
        </authorList>
    </citation>
    <scope>NUCLEOTIDE SEQUENCE [LARGE SCALE GENOMIC DNA]</scope>
    <source>
        <strain>K12 / W3110 / ATCC 27325 / DSM 5911</strain>
    </source>
</reference>
<reference key="4">
    <citation type="journal article" date="1996" name="DNA Res.">
        <title>A 718-kb DNA sequence of the Escherichia coli K-12 genome corresponding to the 12.7-28.0 min region on the linkage map.</title>
        <authorList>
            <person name="Oshima T."/>
            <person name="Aiba H."/>
            <person name="Baba T."/>
            <person name="Fujita K."/>
            <person name="Hayashi K."/>
            <person name="Honjo A."/>
            <person name="Ikemoto K."/>
            <person name="Inada T."/>
            <person name="Itoh T."/>
            <person name="Kajihara M."/>
            <person name="Kanai K."/>
            <person name="Kashimoto K."/>
            <person name="Kimura S."/>
            <person name="Kitagawa M."/>
            <person name="Makino K."/>
            <person name="Masuda S."/>
            <person name="Miki T."/>
            <person name="Mizobuchi K."/>
            <person name="Mori H."/>
            <person name="Motomura K."/>
            <person name="Nakamura Y."/>
            <person name="Nashimoto H."/>
            <person name="Nishio Y."/>
            <person name="Saito N."/>
            <person name="Sampei G."/>
            <person name="Seki Y."/>
            <person name="Tagami H."/>
            <person name="Takemoto K."/>
            <person name="Wada C."/>
            <person name="Yamamoto Y."/>
            <person name="Yano M."/>
            <person name="Horiuchi T."/>
        </authorList>
    </citation>
    <scope>NUCLEOTIDE SEQUENCE [GENOMIC DNA] OF 1-57</scope>
    <source>
        <strain>K12 / W3110 / ATCC 27325 / DSM 5911</strain>
    </source>
</reference>
<reference key="5">
    <citation type="journal article" date="2005" name="Science">
        <title>Global topology analysis of the Escherichia coli inner membrane proteome.</title>
        <authorList>
            <person name="Daley D.O."/>
            <person name="Rapp M."/>
            <person name="Granseth E."/>
            <person name="Melen K."/>
            <person name="Drew D."/>
            <person name="von Heijne G."/>
        </authorList>
    </citation>
    <scope>TOPOLOGY [LARGE SCALE ANALYSIS]</scope>
    <source>
        <strain>K12 / MG1655 / ATCC 47076</strain>
    </source>
</reference>
<reference key="6">
    <citation type="journal article" date="2007" name="J. Biol. Chem.">
        <title>Export pathway selectivity of Escherichia coli twin arginine translocation signal peptides.</title>
        <authorList>
            <person name="Tullman-Ercek D."/>
            <person name="DeLisa M.P."/>
            <person name="Kawarasaki Y."/>
            <person name="Iranpour P."/>
            <person name="Ribnicky B."/>
            <person name="Palmer T."/>
            <person name="Georgiou G."/>
        </authorList>
    </citation>
    <scope>EXPORT VIA THE TAT-SYSTEM</scope>
</reference>
<keyword id="KW-0002">3D-structure</keyword>
<keyword id="KW-0003">3Fe-4S</keyword>
<keyword id="KW-0004">4Fe-4S</keyword>
<keyword id="KW-0997">Cell inner membrane</keyword>
<keyword id="KW-1003">Cell membrane</keyword>
<keyword id="KW-0903">Direct protein sequencing</keyword>
<keyword id="KW-0408">Iron</keyword>
<keyword id="KW-0411">Iron-sulfur</keyword>
<keyword id="KW-0472">Membrane</keyword>
<keyword id="KW-0479">Metal-binding</keyword>
<keyword id="KW-0560">Oxidoreductase</keyword>
<keyword id="KW-1185">Reference proteome</keyword>
<keyword id="KW-0732">Signal</keyword>
<keyword id="KW-0812">Transmembrane</keyword>
<keyword id="KW-1133">Transmembrane helix</keyword>
<sequence length="372" mass="40681">MNNEETFYQAMRRQGVTRRSFLKYCSLAATSLGLGAGMAPKIAWALENKPRIPVVWIHGLECTCCTESFIRSAHPLAKDVILSLISLDYDDTLMAAAGTQAEEVFEDIITQYNGKYILAVEGNPPLGEQGMFCISSGRPFIEKLKRAAAGASAIIAWGTCASWGCVQAARPNPTQATPIDKVITDKPIIKVPGCPPIPDVMSAIITYMVTFDRLPDVDRMGRPLMFYGQRIHDKCYRRAHFDAGEFVQSWDDDAARKGYCLYKMGCKGPTTYNACSSTRWNDGVSFPIQSGHGCLGCAENGFWDRGSFYSRVVDIPQMGTHSTADTVGLTALGVVAAAVGVHAVASAVDQRRRHNQQPTETEHQPGNEDKQA</sequence>
<feature type="signal peptide" description="Tat-type signal" evidence="3 5">
    <location>
        <begin position="1"/>
        <end position="45"/>
    </location>
</feature>
<feature type="chain" id="PRO_0000013427" description="Hydrogenase-1 small chain">
    <location>
        <begin position="46"/>
        <end position="372"/>
    </location>
</feature>
<feature type="topological domain" description="Periplasmic" evidence="2">
    <location>
        <begin position="46"/>
        <end position="325"/>
    </location>
</feature>
<feature type="transmembrane region" description="Helical" evidence="2">
    <location>
        <begin position="326"/>
        <end position="348"/>
    </location>
</feature>
<feature type="topological domain" description="Cytoplasmic" evidence="2">
    <location>
        <begin position="349"/>
        <end position="372"/>
    </location>
</feature>
<feature type="region of interest" description="Disordered" evidence="4">
    <location>
        <begin position="347"/>
        <end position="372"/>
    </location>
</feature>
<feature type="compositionally biased region" description="Basic and acidic residues" evidence="4">
    <location>
        <begin position="360"/>
        <end position="372"/>
    </location>
</feature>
<feature type="binding site" evidence="1">
    <location>
        <position position="62"/>
    </location>
    <ligand>
        <name>[4Fe-4S] cluster</name>
        <dbReference type="ChEBI" id="CHEBI:49883"/>
        <label>1</label>
    </ligand>
</feature>
<feature type="binding site" evidence="1">
    <location>
        <position position="65"/>
    </location>
    <ligand>
        <name>[4Fe-4S] cluster</name>
        <dbReference type="ChEBI" id="CHEBI:49883"/>
        <label>1</label>
    </ligand>
</feature>
<feature type="binding site" evidence="1">
    <location>
        <position position="160"/>
    </location>
    <ligand>
        <name>[4Fe-4S] cluster</name>
        <dbReference type="ChEBI" id="CHEBI:49883"/>
        <label>1</label>
    </ligand>
</feature>
<feature type="binding site" evidence="1">
    <location>
        <position position="194"/>
    </location>
    <ligand>
        <name>[4Fe-4S] cluster</name>
        <dbReference type="ChEBI" id="CHEBI:49883"/>
        <label>1</label>
    </ligand>
</feature>
<feature type="binding site" evidence="1">
    <location>
        <position position="232"/>
    </location>
    <ligand>
        <name>[4Fe-4S] cluster</name>
        <dbReference type="ChEBI" id="CHEBI:49883"/>
        <label>2</label>
    </ligand>
</feature>
<feature type="binding site" evidence="1">
    <location>
        <position position="235"/>
    </location>
    <ligand>
        <name>[4Fe-4S] cluster</name>
        <dbReference type="ChEBI" id="CHEBI:49883"/>
        <label>2</label>
    </ligand>
</feature>
<feature type="binding site" evidence="1">
    <location>
        <position position="260"/>
    </location>
    <ligand>
        <name>[4Fe-4S] cluster</name>
        <dbReference type="ChEBI" id="CHEBI:49883"/>
        <label>2</label>
    </ligand>
</feature>
<feature type="binding site" evidence="1">
    <location>
        <position position="266"/>
    </location>
    <ligand>
        <name>[4Fe-4S] cluster</name>
        <dbReference type="ChEBI" id="CHEBI:49883"/>
        <label>2</label>
    </ligand>
</feature>
<feature type="binding site" evidence="1">
    <location>
        <position position="275"/>
    </location>
    <ligand>
        <name>[3Fe-4S] cluster</name>
        <dbReference type="ChEBI" id="CHEBI:21137"/>
    </ligand>
</feature>
<feature type="binding site" evidence="1">
    <location>
        <position position="294"/>
    </location>
    <ligand>
        <name>[3Fe-4S] cluster</name>
        <dbReference type="ChEBI" id="CHEBI:21137"/>
    </ligand>
</feature>
<feature type="binding site" evidence="1">
    <location>
        <position position="297"/>
    </location>
    <ligand>
        <name>[3Fe-4S] cluster</name>
        <dbReference type="ChEBI" id="CHEBI:21137"/>
    </ligand>
</feature>
<feature type="strand" evidence="8">
    <location>
        <begin position="52"/>
        <end position="58"/>
    </location>
</feature>
<feature type="helix" evidence="8">
    <location>
        <begin position="64"/>
        <end position="70"/>
    </location>
</feature>
<feature type="turn" evidence="8">
    <location>
        <begin position="73"/>
        <end position="76"/>
    </location>
</feature>
<feature type="helix" evidence="8">
    <location>
        <begin position="77"/>
        <end position="83"/>
    </location>
</feature>
<feature type="strand" evidence="8">
    <location>
        <begin position="85"/>
        <end position="90"/>
    </location>
</feature>
<feature type="turn" evidence="8">
    <location>
        <begin position="91"/>
        <end position="93"/>
    </location>
</feature>
<feature type="helix" evidence="8">
    <location>
        <begin position="98"/>
        <end position="111"/>
    </location>
</feature>
<feature type="turn" evidence="8">
    <location>
        <begin position="112"/>
        <end position="115"/>
    </location>
</feature>
<feature type="strand" evidence="8">
    <location>
        <begin position="116"/>
        <end position="123"/>
    </location>
</feature>
<feature type="helix" evidence="8">
    <location>
        <begin position="127"/>
        <end position="130"/>
    </location>
</feature>
<feature type="strand" evidence="8">
    <location>
        <begin position="133"/>
        <end position="135"/>
    </location>
</feature>
<feature type="helix" evidence="8">
    <location>
        <begin position="140"/>
        <end position="150"/>
    </location>
</feature>
<feature type="strand" evidence="8">
    <location>
        <begin position="151"/>
        <end position="157"/>
    </location>
</feature>
<feature type="helix" evidence="8">
    <location>
        <begin position="158"/>
        <end position="162"/>
    </location>
</feature>
<feature type="helix" evidence="8">
    <location>
        <begin position="166"/>
        <end position="168"/>
    </location>
</feature>
<feature type="helix" evidence="8">
    <location>
        <begin position="179"/>
        <end position="181"/>
    </location>
</feature>
<feature type="strand" evidence="8">
    <location>
        <begin position="188"/>
        <end position="191"/>
    </location>
</feature>
<feature type="strand" evidence="8">
    <location>
        <begin position="193"/>
        <end position="195"/>
    </location>
</feature>
<feature type="helix" evidence="8">
    <location>
        <begin position="198"/>
        <end position="211"/>
    </location>
</feature>
<feature type="helix" evidence="8">
    <location>
        <begin position="224"/>
        <end position="227"/>
    </location>
</feature>
<feature type="strand" evidence="8">
    <location>
        <begin position="228"/>
        <end position="230"/>
    </location>
</feature>
<feature type="helix" evidence="8">
    <location>
        <begin position="231"/>
        <end position="233"/>
    </location>
</feature>
<feature type="helix" evidence="8">
    <location>
        <begin position="238"/>
        <end position="243"/>
    </location>
</feature>
<feature type="helix" evidence="8">
    <location>
        <begin position="253"/>
        <end position="256"/>
    </location>
</feature>
<feature type="helix" evidence="8">
    <location>
        <begin position="262"/>
        <end position="264"/>
    </location>
</feature>
<feature type="helix" evidence="8">
    <location>
        <begin position="268"/>
        <end position="270"/>
    </location>
</feature>
<feature type="strand" evidence="8">
    <location>
        <begin position="272"/>
        <end position="274"/>
    </location>
</feature>
<feature type="turn" evidence="8">
    <location>
        <begin position="275"/>
        <end position="277"/>
    </location>
</feature>
<feature type="turn" evidence="8">
    <location>
        <begin position="281"/>
        <end position="284"/>
    </location>
</feature>
<feature type="turn" evidence="8">
    <location>
        <begin position="287"/>
        <end position="291"/>
    </location>
</feature>
<feature type="helix" evidence="8">
    <location>
        <begin position="302"/>
        <end position="304"/>
    </location>
</feature>
<feature type="helix" evidence="9">
    <location>
        <begin position="320"/>
        <end position="339"/>
    </location>
</feature>
<feature type="strand" evidence="7">
    <location>
        <begin position="346"/>
        <end position="349"/>
    </location>
</feature>
<accession>P69739</accession>
<accession>P19928</accession>
<dbReference type="EC" id="1.12.99.6"/>
<dbReference type="EMBL" id="M34825">
    <property type="protein sequence ID" value="AAA23997.1"/>
    <property type="molecule type" value="Genomic_DNA"/>
</dbReference>
<dbReference type="EMBL" id="U00096">
    <property type="protein sequence ID" value="AAC74057.1"/>
    <property type="molecule type" value="Genomic_DNA"/>
</dbReference>
<dbReference type="EMBL" id="AP009048">
    <property type="protein sequence ID" value="BAA35737.2"/>
    <property type="molecule type" value="Genomic_DNA"/>
</dbReference>
<dbReference type="PIR" id="JV0072">
    <property type="entry name" value="HQECSN"/>
</dbReference>
<dbReference type="RefSeq" id="NP_415491.1">
    <property type="nucleotide sequence ID" value="NC_000913.3"/>
</dbReference>
<dbReference type="RefSeq" id="WP_001058323.1">
    <property type="nucleotide sequence ID" value="NZ_SSZK01000002.1"/>
</dbReference>
<dbReference type="PDB" id="3UQY">
    <property type="method" value="X-ray"/>
    <property type="resolution" value="1.47 A"/>
    <property type="chains" value="S/T=46-372"/>
</dbReference>
<dbReference type="PDB" id="3USC">
    <property type="method" value="X-ray"/>
    <property type="resolution" value="2.00 A"/>
    <property type="chains" value="S/T=46-372"/>
</dbReference>
<dbReference type="PDB" id="3USE">
    <property type="method" value="X-ray"/>
    <property type="resolution" value="1.67 A"/>
    <property type="chains" value="S/T=46-372"/>
</dbReference>
<dbReference type="PDB" id="4GD3">
    <property type="method" value="X-ray"/>
    <property type="resolution" value="3.30 A"/>
    <property type="chains" value="Q/R/S/T=46-372"/>
</dbReference>
<dbReference type="PDB" id="4UE3">
    <property type="method" value="X-ray"/>
    <property type="resolution" value="1.40 A"/>
    <property type="chains" value="S/T=46-372"/>
</dbReference>
<dbReference type="PDB" id="5A4F">
    <property type="method" value="X-ray"/>
    <property type="resolution" value="1.25 A"/>
    <property type="chains" value="S/T=46-372"/>
</dbReference>
<dbReference type="PDB" id="5A4I">
    <property type="method" value="X-ray"/>
    <property type="resolution" value="1.23 A"/>
    <property type="chains" value="S/T=46-372"/>
</dbReference>
<dbReference type="PDB" id="5A4M">
    <property type="method" value="X-ray"/>
    <property type="resolution" value="1.70 A"/>
    <property type="chains" value="S/T=46-311"/>
</dbReference>
<dbReference type="PDB" id="5ADU">
    <property type="method" value="X-ray"/>
    <property type="resolution" value="1.10 A"/>
    <property type="chains" value="S/T=46-372"/>
</dbReference>
<dbReference type="PDB" id="5JRD">
    <property type="method" value="X-ray"/>
    <property type="resolution" value="1.20 A"/>
    <property type="chains" value="S/T=46-372"/>
</dbReference>
<dbReference type="PDB" id="5LMM">
    <property type="method" value="X-ray"/>
    <property type="resolution" value="1.20 A"/>
    <property type="chains" value="S/T=46-372"/>
</dbReference>
<dbReference type="PDB" id="5LRY">
    <property type="method" value="X-ray"/>
    <property type="resolution" value="1.40 A"/>
    <property type="chains" value="S/T=46-372"/>
</dbReference>
<dbReference type="PDB" id="6FPI">
    <property type="method" value="X-ray"/>
    <property type="resolution" value="1.50 A"/>
    <property type="chains" value="S/T=46-372"/>
</dbReference>
<dbReference type="PDB" id="6FPO">
    <property type="method" value="X-ray"/>
    <property type="resolution" value="1.05 A"/>
    <property type="chains" value="S/T=46-372"/>
</dbReference>
<dbReference type="PDB" id="6FPW">
    <property type="method" value="X-ray"/>
    <property type="resolution" value="1.35 A"/>
    <property type="chains" value="S/T=46-372"/>
</dbReference>
<dbReference type="PDB" id="6G7R">
    <property type="method" value="X-ray"/>
    <property type="resolution" value="1.20 A"/>
    <property type="chains" value="S/T=46-372"/>
</dbReference>
<dbReference type="PDB" id="6G94">
    <property type="method" value="X-ray"/>
    <property type="resolution" value="2.50 A"/>
    <property type="chains" value="Q/R/S/T=46-372"/>
</dbReference>
<dbReference type="PDB" id="6GAL">
    <property type="method" value="X-ray"/>
    <property type="resolution" value="1.25 A"/>
    <property type="chains" value="S/T=46-372"/>
</dbReference>
<dbReference type="PDB" id="6RP2">
    <property type="method" value="X-ray"/>
    <property type="resolution" value="1.35 A"/>
    <property type="chains" value="S/T=49-372"/>
</dbReference>
<dbReference type="PDBsum" id="3UQY"/>
<dbReference type="PDBsum" id="3USC"/>
<dbReference type="PDBsum" id="3USE"/>
<dbReference type="PDBsum" id="4GD3"/>
<dbReference type="PDBsum" id="4UE3"/>
<dbReference type="PDBsum" id="5A4F"/>
<dbReference type="PDBsum" id="5A4I"/>
<dbReference type="PDBsum" id="5A4M"/>
<dbReference type="PDBsum" id="5ADU"/>
<dbReference type="PDBsum" id="5JRD"/>
<dbReference type="PDBsum" id="5LMM"/>
<dbReference type="PDBsum" id="5LRY"/>
<dbReference type="PDBsum" id="6FPI"/>
<dbReference type="PDBsum" id="6FPO"/>
<dbReference type="PDBsum" id="6FPW"/>
<dbReference type="PDBsum" id="6G7R"/>
<dbReference type="PDBsum" id="6G94"/>
<dbReference type="PDBsum" id="6GAL"/>
<dbReference type="PDBsum" id="6RP2"/>
<dbReference type="SMR" id="P69739"/>
<dbReference type="BioGRID" id="4261801">
    <property type="interactions" value="75"/>
</dbReference>
<dbReference type="BioGRID" id="849953">
    <property type="interactions" value="2"/>
</dbReference>
<dbReference type="ComplexPortal" id="CPX-281">
    <property type="entry name" value="Hydrogenase-1 complex"/>
</dbReference>
<dbReference type="DIP" id="DIP-47848N"/>
<dbReference type="FunCoup" id="P69739">
    <property type="interactions" value="198"/>
</dbReference>
<dbReference type="IntAct" id="P69739">
    <property type="interactions" value="5"/>
</dbReference>
<dbReference type="STRING" id="511145.b0972"/>
<dbReference type="jPOST" id="P69739"/>
<dbReference type="PaxDb" id="511145-b0972"/>
<dbReference type="EnsemblBacteria" id="AAC74057">
    <property type="protein sequence ID" value="AAC74057"/>
    <property type="gene ID" value="b0972"/>
</dbReference>
<dbReference type="GeneID" id="945579"/>
<dbReference type="KEGG" id="ecj:JW0954"/>
<dbReference type="KEGG" id="eco:b0972"/>
<dbReference type="KEGG" id="ecoc:C3026_05935"/>
<dbReference type="PATRIC" id="fig|1411691.4.peg.1302"/>
<dbReference type="EchoBASE" id="EB0463"/>
<dbReference type="eggNOG" id="COG1740">
    <property type="taxonomic scope" value="Bacteria"/>
</dbReference>
<dbReference type="HOGENOM" id="CLU_046107_0_0_6"/>
<dbReference type="InParanoid" id="P69739"/>
<dbReference type="OMA" id="RSFNAHN"/>
<dbReference type="OrthoDB" id="9766729at2"/>
<dbReference type="PhylomeDB" id="P69739"/>
<dbReference type="BioCyc" id="EcoCyc:HYAA-MONOMER"/>
<dbReference type="BioCyc" id="MetaCyc:HYAA-MONOMER"/>
<dbReference type="BRENDA" id="1.12.99.6">
    <property type="organism ID" value="2026"/>
</dbReference>
<dbReference type="EvolutionaryTrace" id="P69739"/>
<dbReference type="PHI-base" id="PHI:11000"/>
<dbReference type="PRO" id="PR:P69739"/>
<dbReference type="Proteomes" id="UP000000625">
    <property type="component" value="Chromosome"/>
</dbReference>
<dbReference type="GO" id="GO:0044569">
    <property type="term" value="C:[Ni-Fe] hydrogenase complex"/>
    <property type="evidence" value="ECO:0000314"/>
    <property type="project" value="EcoCyc"/>
</dbReference>
<dbReference type="GO" id="GO:0009375">
    <property type="term" value="C:ferredoxin hydrogenase complex"/>
    <property type="evidence" value="ECO:0007669"/>
    <property type="project" value="InterPro"/>
</dbReference>
<dbReference type="GO" id="GO:0016020">
    <property type="term" value="C:membrane"/>
    <property type="evidence" value="ECO:0000314"/>
    <property type="project" value="EcoCyc"/>
</dbReference>
<dbReference type="GO" id="GO:0098567">
    <property type="term" value="C:periplasmic side of plasma membrane"/>
    <property type="evidence" value="ECO:0000314"/>
    <property type="project" value="ComplexPortal"/>
</dbReference>
<dbReference type="GO" id="GO:0051538">
    <property type="term" value="F:3 iron, 4 sulfur cluster binding"/>
    <property type="evidence" value="ECO:0000314"/>
    <property type="project" value="EcoCyc"/>
</dbReference>
<dbReference type="GO" id="GO:0051539">
    <property type="term" value="F:4 iron, 4 sulfur cluster binding"/>
    <property type="evidence" value="ECO:0000314"/>
    <property type="project" value="EcoCyc"/>
</dbReference>
<dbReference type="GO" id="GO:0009055">
    <property type="term" value="F:electron transfer activity"/>
    <property type="evidence" value="ECO:0000314"/>
    <property type="project" value="EcoCyc"/>
</dbReference>
<dbReference type="GO" id="GO:0008901">
    <property type="term" value="F:ferredoxin hydrogenase activity"/>
    <property type="evidence" value="ECO:0007669"/>
    <property type="project" value="InterPro"/>
</dbReference>
<dbReference type="GO" id="GO:0033748">
    <property type="term" value="F:hydrogenase (acceptor) activity"/>
    <property type="evidence" value="ECO:0000305"/>
    <property type="project" value="EcoCyc"/>
</dbReference>
<dbReference type="GO" id="GO:0046872">
    <property type="term" value="F:metal ion binding"/>
    <property type="evidence" value="ECO:0007669"/>
    <property type="project" value="UniProtKB-KW"/>
</dbReference>
<dbReference type="GO" id="GO:0019645">
    <property type="term" value="P:anaerobic electron transport chain"/>
    <property type="evidence" value="ECO:0000314"/>
    <property type="project" value="ComplexPortal"/>
</dbReference>
<dbReference type="GO" id="GO:0009061">
    <property type="term" value="P:anaerobic respiration"/>
    <property type="evidence" value="ECO:0000314"/>
    <property type="project" value="ComplexPortal"/>
</dbReference>
<dbReference type="GO" id="GO:0009267">
    <property type="term" value="P:cellular response to starvation"/>
    <property type="evidence" value="ECO:0000314"/>
    <property type="project" value="ComplexPortal"/>
</dbReference>
<dbReference type="GO" id="GO:0006113">
    <property type="term" value="P:fermentation"/>
    <property type="evidence" value="ECO:0000314"/>
    <property type="project" value="ComplexPortal"/>
</dbReference>
<dbReference type="GO" id="GO:1902421">
    <property type="term" value="P:hydrogen metabolic process"/>
    <property type="evidence" value="ECO:0000305"/>
    <property type="project" value="EcoCyc"/>
</dbReference>
<dbReference type="FunFam" id="3.40.50.700:FF:000002">
    <property type="entry name" value="Hydrogenase-1 small chain"/>
    <property type="match status" value="1"/>
</dbReference>
<dbReference type="FunFam" id="4.10.480.10:FF:000002">
    <property type="entry name" value="Hydrogenase-1 small chain"/>
    <property type="match status" value="1"/>
</dbReference>
<dbReference type="Gene3D" id="4.10.480.10">
    <property type="entry name" value="Cytochrome-c3 hydrogenase, C-terminal domain"/>
    <property type="match status" value="1"/>
</dbReference>
<dbReference type="Gene3D" id="3.40.50.700">
    <property type="entry name" value="NADH:ubiquinone oxidoreductase-like, 20kDa subunit"/>
    <property type="match status" value="1"/>
</dbReference>
<dbReference type="InterPro" id="IPR027394">
    <property type="entry name" value="Cytochrome-c3_hydrogenase_C"/>
</dbReference>
<dbReference type="InterPro" id="IPR006137">
    <property type="entry name" value="NADH_UbQ_OxRdtase-like_20kDa"/>
</dbReference>
<dbReference type="InterPro" id="IPR037148">
    <property type="entry name" value="NiFe-Hase_small_C_sf"/>
</dbReference>
<dbReference type="InterPro" id="IPR037024">
    <property type="entry name" value="NiFe_Hase_small_N_sf"/>
</dbReference>
<dbReference type="InterPro" id="IPR001821">
    <property type="entry name" value="NiFe_hydrogenase_ssu"/>
</dbReference>
<dbReference type="InterPro" id="IPR006311">
    <property type="entry name" value="TAT_signal"/>
</dbReference>
<dbReference type="InterPro" id="IPR019546">
    <property type="entry name" value="TAT_signal_bac_arc"/>
</dbReference>
<dbReference type="NCBIfam" id="TIGR00391">
    <property type="entry name" value="hydA"/>
    <property type="match status" value="1"/>
</dbReference>
<dbReference type="NCBIfam" id="TIGR01409">
    <property type="entry name" value="TAT_signal_seq"/>
    <property type="match status" value="1"/>
</dbReference>
<dbReference type="PANTHER" id="PTHR30013:SF6">
    <property type="entry name" value="HYDROGENASE-1 SMALL CHAIN"/>
    <property type="match status" value="1"/>
</dbReference>
<dbReference type="PANTHER" id="PTHR30013">
    <property type="entry name" value="NIFE / NIFESE HYDROGENASE SMALL SUBUNIT FAMILY MEMBER"/>
    <property type="match status" value="1"/>
</dbReference>
<dbReference type="Pfam" id="PF14720">
    <property type="entry name" value="NiFe_hyd_SSU_C"/>
    <property type="match status" value="1"/>
</dbReference>
<dbReference type="Pfam" id="PF01058">
    <property type="entry name" value="Oxidored_q6"/>
    <property type="match status" value="1"/>
</dbReference>
<dbReference type="PIRSF" id="PIRSF000310">
    <property type="entry name" value="NiFe_hyd_ssu"/>
    <property type="match status" value="1"/>
</dbReference>
<dbReference type="PRINTS" id="PR00614">
    <property type="entry name" value="NIHGNASESMLL"/>
</dbReference>
<dbReference type="SUPFAM" id="SSF56770">
    <property type="entry name" value="HydA/Nqo6-like"/>
    <property type="match status" value="1"/>
</dbReference>
<dbReference type="PROSITE" id="PS51318">
    <property type="entry name" value="TAT"/>
    <property type="match status" value="1"/>
</dbReference>
<evidence type="ECO:0000250" key="1">
    <source>
        <dbReference type="UniProtKB" id="P21853"/>
    </source>
</evidence>
<evidence type="ECO:0000255" key="2"/>
<evidence type="ECO:0000255" key="3">
    <source>
        <dbReference type="PROSITE-ProRule" id="PRU00648"/>
    </source>
</evidence>
<evidence type="ECO:0000256" key="4">
    <source>
        <dbReference type="SAM" id="MobiDB-lite"/>
    </source>
</evidence>
<evidence type="ECO:0000269" key="5">
    <source>
    </source>
</evidence>
<evidence type="ECO:0000305" key="6"/>
<evidence type="ECO:0007829" key="7">
    <source>
        <dbReference type="PDB" id="4GD3"/>
    </source>
</evidence>
<evidence type="ECO:0007829" key="8">
    <source>
        <dbReference type="PDB" id="6FPO"/>
    </source>
</evidence>
<evidence type="ECO:0007829" key="9">
    <source>
        <dbReference type="PDB" id="6G94"/>
    </source>
</evidence>
<proteinExistence type="evidence at protein level"/>
<protein>
    <recommendedName>
        <fullName>Hydrogenase-1 small chain</fullName>
        <shortName>HYD1</shortName>
        <ecNumber>1.12.99.6</ecNumber>
    </recommendedName>
    <alternativeName>
        <fullName>Membrane-bound hydrogenase 1 small subunit</fullName>
    </alternativeName>
    <alternativeName>
        <fullName>NiFe hydrogenase</fullName>
    </alternativeName>
</protein>
<name>MBHS_ECOLI</name>
<organism>
    <name type="scientific">Escherichia coli (strain K12)</name>
    <dbReference type="NCBI Taxonomy" id="83333"/>
    <lineage>
        <taxon>Bacteria</taxon>
        <taxon>Pseudomonadati</taxon>
        <taxon>Pseudomonadota</taxon>
        <taxon>Gammaproteobacteria</taxon>
        <taxon>Enterobacterales</taxon>
        <taxon>Enterobacteriaceae</taxon>
        <taxon>Escherichia</taxon>
    </lineage>
</organism>